<comment type="function">
    <text evidence="1">Transfers an acetyl group from acetyl-CoA to L-homoserine, forming acetyl-L-homoserine.</text>
</comment>
<comment type="catalytic activity">
    <reaction evidence="1">
        <text>L-homoserine + acetyl-CoA = O-acetyl-L-homoserine + CoA</text>
        <dbReference type="Rhea" id="RHEA:13701"/>
        <dbReference type="ChEBI" id="CHEBI:57287"/>
        <dbReference type="ChEBI" id="CHEBI:57288"/>
        <dbReference type="ChEBI" id="CHEBI:57476"/>
        <dbReference type="ChEBI" id="CHEBI:57716"/>
        <dbReference type="EC" id="2.3.1.31"/>
    </reaction>
</comment>
<comment type="pathway">
    <text evidence="1">Amino-acid biosynthesis; L-methionine biosynthesis via de novo pathway; O-acetyl-L-homoserine from L-homoserine: step 1/1.</text>
</comment>
<comment type="subunit">
    <text evidence="1">Homodimer.</text>
</comment>
<comment type="subcellular location">
    <subcellularLocation>
        <location evidence="1">Cytoplasm</location>
    </subcellularLocation>
</comment>
<comment type="similarity">
    <text evidence="1">Belongs to the AB hydrolase superfamily. MetX family.</text>
</comment>
<evidence type="ECO:0000255" key="1">
    <source>
        <dbReference type="HAMAP-Rule" id="MF_00296"/>
    </source>
</evidence>
<dbReference type="EC" id="2.3.1.31" evidence="1"/>
<dbReference type="EMBL" id="CP000084">
    <property type="protein sequence ID" value="AAZ21038.1"/>
    <property type="molecule type" value="Genomic_DNA"/>
</dbReference>
<dbReference type="RefSeq" id="WP_011281552.1">
    <property type="nucleotide sequence ID" value="NC_007205.1"/>
</dbReference>
<dbReference type="SMR" id="Q4FP51"/>
<dbReference type="STRING" id="335992.SAR11_0217"/>
<dbReference type="ESTHER" id="pelub-q4fp51">
    <property type="family name" value="Homoserine_transacetylase"/>
</dbReference>
<dbReference type="GeneID" id="66294714"/>
<dbReference type="KEGG" id="pub:SAR11_0217"/>
<dbReference type="eggNOG" id="COG2021">
    <property type="taxonomic scope" value="Bacteria"/>
</dbReference>
<dbReference type="HOGENOM" id="CLU_028760_1_2_5"/>
<dbReference type="OrthoDB" id="9800754at2"/>
<dbReference type="UniPathway" id="UPA00051">
    <property type="reaction ID" value="UER00074"/>
</dbReference>
<dbReference type="Proteomes" id="UP000002528">
    <property type="component" value="Chromosome"/>
</dbReference>
<dbReference type="GO" id="GO:0005737">
    <property type="term" value="C:cytoplasm"/>
    <property type="evidence" value="ECO:0007669"/>
    <property type="project" value="UniProtKB-SubCell"/>
</dbReference>
<dbReference type="GO" id="GO:0004414">
    <property type="term" value="F:homoserine O-acetyltransferase activity"/>
    <property type="evidence" value="ECO:0007669"/>
    <property type="project" value="UniProtKB-UniRule"/>
</dbReference>
<dbReference type="GO" id="GO:0009092">
    <property type="term" value="P:homoserine metabolic process"/>
    <property type="evidence" value="ECO:0007669"/>
    <property type="project" value="TreeGrafter"/>
</dbReference>
<dbReference type="GO" id="GO:0009086">
    <property type="term" value="P:methionine biosynthetic process"/>
    <property type="evidence" value="ECO:0007669"/>
    <property type="project" value="UniProtKB-UniRule"/>
</dbReference>
<dbReference type="FunFam" id="1.10.1740.110:FF:000001">
    <property type="entry name" value="Homoserine O-acetyltransferase"/>
    <property type="match status" value="1"/>
</dbReference>
<dbReference type="Gene3D" id="1.10.1740.110">
    <property type="match status" value="1"/>
</dbReference>
<dbReference type="Gene3D" id="3.40.50.1820">
    <property type="entry name" value="alpha/beta hydrolase"/>
    <property type="match status" value="1"/>
</dbReference>
<dbReference type="HAMAP" id="MF_00296">
    <property type="entry name" value="MetX_acyltransf"/>
    <property type="match status" value="1"/>
</dbReference>
<dbReference type="InterPro" id="IPR000073">
    <property type="entry name" value="AB_hydrolase_1"/>
</dbReference>
<dbReference type="InterPro" id="IPR029058">
    <property type="entry name" value="AB_hydrolase_fold"/>
</dbReference>
<dbReference type="InterPro" id="IPR008220">
    <property type="entry name" value="HAT_MetX-like"/>
</dbReference>
<dbReference type="NCBIfam" id="TIGR01392">
    <property type="entry name" value="homoserO_Ac_trn"/>
    <property type="match status" value="1"/>
</dbReference>
<dbReference type="NCBIfam" id="NF001209">
    <property type="entry name" value="PRK00175.1"/>
    <property type="match status" value="1"/>
</dbReference>
<dbReference type="PANTHER" id="PTHR32268">
    <property type="entry name" value="HOMOSERINE O-ACETYLTRANSFERASE"/>
    <property type="match status" value="1"/>
</dbReference>
<dbReference type="PANTHER" id="PTHR32268:SF11">
    <property type="entry name" value="HOMOSERINE O-ACETYLTRANSFERASE"/>
    <property type="match status" value="1"/>
</dbReference>
<dbReference type="Pfam" id="PF00561">
    <property type="entry name" value="Abhydrolase_1"/>
    <property type="match status" value="1"/>
</dbReference>
<dbReference type="PIRSF" id="PIRSF000443">
    <property type="entry name" value="Homoser_Ac_trans"/>
    <property type="match status" value="1"/>
</dbReference>
<dbReference type="SUPFAM" id="SSF53474">
    <property type="entry name" value="alpha/beta-Hydrolases"/>
    <property type="match status" value="1"/>
</dbReference>
<proteinExistence type="inferred from homology"/>
<protein>
    <recommendedName>
        <fullName evidence="1">Homoserine O-acetyltransferase</fullName>
        <shortName evidence="1">HAT</shortName>
        <ecNumber evidence="1">2.3.1.31</ecNumber>
    </recommendedName>
    <alternativeName>
        <fullName evidence="1">Homoserine transacetylase</fullName>
        <shortName evidence="1">HTA</shortName>
    </alternativeName>
</protein>
<reference key="1">
    <citation type="journal article" date="2005" name="Science">
        <title>Genome streamlining in a cosmopolitan oceanic bacterium.</title>
        <authorList>
            <person name="Giovannoni S.J."/>
            <person name="Tripp H.J."/>
            <person name="Givan S."/>
            <person name="Podar M."/>
            <person name="Vergin K.L."/>
            <person name="Baptista D."/>
            <person name="Bibbs L."/>
            <person name="Eads J."/>
            <person name="Richardson T.H."/>
            <person name="Noordewier M."/>
            <person name="Rappe M.S."/>
            <person name="Short J.M."/>
            <person name="Carrington J.C."/>
            <person name="Mathur E.J."/>
        </authorList>
    </citation>
    <scope>NUCLEOTIDE SEQUENCE [LARGE SCALE GENOMIC DNA]</scope>
    <source>
        <strain>HTCC1062</strain>
    </source>
</reference>
<sequence length="372" mass="41643">MNINVNIKNIIIDKPLKLDCGQTINNYSLAYETYGSLNENKDNAILIFHALTGDQFVSGINPITKKEGWWSYAVGSGKAIDTDKYFVICANVIGGCMGSYGPSEINPDTNKKYGTTFPVITINDMVNAQFNLLNFFNIEKLFAVMGGSMGGMQTLQFVNNFPDKAKVAIPIACTASHSAQNIAFNELGRQSIMADANWENGDYSNQNKNPNKGLSVARMAAHITYLSKNGLQEKFGRKLQERDDLKFGFDADFQIESYLRYQGSVFVDRFDANSYLYITRAMDYFDLVKEHHGNLSKAFEKTKTKFLIISFTSDWLYPTSENKEIVIALNAIGAEVGFVEIESDKGHDSFLLKVPKFLNTLGDYIKTAYSKN</sequence>
<accession>Q4FP51</accession>
<feature type="chain" id="PRO_0000231877" description="Homoserine O-acetyltransferase">
    <location>
        <begin position="1"/>
        <end position="372"/>
    </location>
</feature>
<feature type="domain" description="AB hydrolase-1" evidence="1">
    <location>
        <begin position="43"/>
        <end position="353"/>
    </location>
</feature>
<feature type="active site" description="Nucleophile" evidence="1">
    <location>
        <position position="148"/>
    </location>
</feature>
<feature type="active site" evidence="1">
    <location>
        <position position="314"/>
    </location>
</feature>
<feature type="active site" evidence="1">
    <location>
        <position position="347"/>
    </location>
</feature>
<feature type="binding site" evidence="1">
    <location>
        <position position="218"/>
    </location>
    <ligand>
        <name>substrate</name>
    </ligand>
</feature>
<feature type="binding site" evidence="1">
    <location>
        <position position="348"/>
    </location>
    <ligand>
        <name>substrate</name>
    </ligand>
</feature>
<keyword id="KW-0012">Acyltransferase</keyword>
<keyword id="KW-0028">Amino-acid biosynthesis</keyword>
<keyword id="KW-0963">Cytoplasm</keyword>
<keyword id="KW-0486">Methionine biosynthesis</keyword>
<keyword id="KW-1185">Reference proteome</keyword>
<keyword id="KW-0808">Transferase</keyword>
<gene>
    <name evidence="1" type="primary">metXA</name>
    <name type="ordered locus">SAR11_0217</name>
</gene>
<name>METXA_PELUB</name>
<organism>
    <name type="scientific">Pelagibacter ubique (strain HTCC1062)</name>
    <dbReference type="NCBI Taxonomy" id="335992"/>
    <lineage>
        <taxon>Bacteria</taxon>
        <taxon>Pseudomonadati</taxon>
        <taxon>Pseudomonadota</taxon>
        <taxon>Alphaproteobacteria</taxon>
        <taxon>Candidatus Pelagibacterales</taxon>
        <taxon>Candidatus Pelagibacteraceae</taxon>
        <taxon>Candidatus Pelagibacter</taxon>
    </lineage>
</organism>